<gene>
    <name evidence="6" type="ORF">HT_0033460</name>
</gene>
<feature type="chain" id="PRO_0000461688" description="Symportin 1">
    <location>
        <begin position="1"/>
        <end position="676"/>
    </location>
</feature>
<feature type="repeat" description="ARM 1" evidence="1">
    <location>
        <begin position="183"/>
        <end position="216"/>
    </location>
</feature>
<feature type="repeat" description="ARM 2" evidence="1">
    <location>
        <begin position="420"/>
        <end position="453"/>
    </location>
</feature>
<feature type="region of interest" description="Disordered" evidence="2">
    <location>
        <begin position="1"/>
        <end position="28"/>
    </location>
</feature>
<feature type="region of interest" description="Disordered" evidence="2">
    <location>
        <begin position="325"/>
        <end position="385"/>
    </location>
</feature>
<feature type="compositionally biased region" description="Basic residues" evidence="2">
    <location>
        <begin position="1"/>
        <end position="10"/>
    </location>
</feature>
<feature type="compositionally biased region" description="Acidic residues" evidence="2">
    <location>
        <begin position="338"/>
        <end position="354"/>
    </location>
</feature>
<feature type="compositionally biased region" description="Acidic residues" evidence="2">
    <location>
        <begin position="363"/>
        <end position="385"/>
    </location>
</feature>
<feature type="helix" evidence="12">
    <location>
        <begin position="26"/>
        <end position="34"/>
    </location>
</feature>
<feature type="helix" evidence="12">
    <location>
        <begin position="37"/>
        <end position="43"/>
    </location>
</feature>
<feature type="strand" evidence="12">
    <location>
        <begin position="44"/>
        <end position="46"/>
    </location>
</feature>
<feature type="helix" evidence="12">
    <location>
        <begin position="50"/>
        <end position="61"/>
    </location>
</feature>
<feature type="helix" evidence="12">
    <location>
        <begin position="65"/>
        <end position="73"/>
    </location>
</feature>
<feature type="helix" evidence="12">
    <location>
        <begin position="76"/>
        <end position="82"/>
    </location>
</feature>
<feature type="turn" evidence="12">
    <location>
        <begin position="83"/>
        <end position="86"/>
    </location>
</feature>
<feature type="helix" evidence="12">
    <location>
        <begin position="90"/>
        <end position="106"/>
    </location>
</feature>
<feature type="helix" evidence="12">
    <location>
        <begin position="109"/>
        <end position="117"/>
    </location>
</feature>
<feature type="helix" evidence="12">
    <location>
        <begin position="120"/>
        <end position="136"/>
    </location>
</feature>
<feature type="turn" evidence="12">
    <location>
        <begin position="138"/>
        <end position="141"/>
    </location>
</feature>
<feature type="helix" evidence="12">
    <location>
        <begin position="142"/>
        <end position="144"/>
    </location>
</feature>
<feature type="helix" evidence="12">
    <location>
        <begin position="147"/>
        <end position="170"/>
    </location>
</feature>
<feature type="helix" evidence="12">
    <location>
        <begin position="172"/>
        <end position="179"/>
    </location>
</feature>
<feature type="helix" evidence="12">
    <location>
        <begin position="182"/>
        <end position="194"/>
    </location>
</feature>
<feature type="helix" evidence="12">
    <location>
        <begin position="199"/>
        <end position="213"/>
    </location>
</feature>
<feature type="helix" evidence="12">
    <location>
        <begin position="217"/>
        <end position="224"/>
    </location>
</feature>
<feature type="helix" evidence="12">
    <location>
        <begin position="231"/>
        <end position="240"/>
    </location>
</feature>
<feature type="helix" evidence="12">
    <location>
        <begin position="246"/>
        <end position="260"/>
    </location>
</feature>
<feature type="strand" evidence="11">
    <location>
        <begin position="264"/>
        <end position="266"/>
    </location>
</feature>
<feature type="helix" evidence="12">
    <location>
        <begin position="269"/>
        <end position="271"/>
    </location>
</feature>
<feature type="helix" evidence="12">
    <location>
        <begin position="274"/>
        <end position="276"/>
    </location>
</feature>
<feature type="helix" evidence="12">
    <location>
        <begin position="278"/>
        <end position="285"/>
    </location>
</feature>
<feature type="turn" evidence="12">
    <location>
        <begin position="297"/>
        <end position="301"/>
    </location>
</feature>
<feature type="helix" evidence="12">
    <location>
        <begin position="302"/>
        <end position="318"/>
    </location>
</feature>
<feature type="helix" evidence="12">
    <location>
        <begin position="320"/>
        <end position="324"/>
    </location>
</feature>
<feature type="helix" evidence="13">
    <location>
        <begin position="389"/>
        <end position="397"/>
    </location>
</feature>
<feature type="strand" evidence="13">
    <location>
        <begin position="403"/>
        <end position="405"/>
    </location>
</feature>
<feature type="strand" evidence="14">
    <location>
        <begin position="408"/>
        <end position="410"/>
    </location>
</feature>
<feature type="helix" evidence="12">
    <location>
        <begin position="412"/>
        <end position="419"/>
    </location>
</feature>
<feature type="helix" evidence="12">
    <location>
        <begin position="421"/>
        <end position="429"/>
    </location>
</feature>
<feature type="helix" evidence="12">
    <location>
        <begin position="436"/>
        <end position="457"/>
    </location>
</feature>
<feature type="turn" evidence="12">
    <location>
        <begin position="462"/>
        <end position="466"/>
    </location>
</feature>
<feature type="helix" evidence="12">
    <location>
        <begin position="467"/>
        <end position="483"/>
    </location>
</feature>
<feature type="helix" evidence="12">
    <location>
        <begin position="485"/>
        <end position="489"/>
    </location>
</feature>
<feature type="helix" evidence="12">
    <location>
        <begin position="496"/>
        <end position="513"/>
    </location>
</feature>
<feature type="helix" evidence="12">
    <location>
        <begin position="514"/>
        <end position="516"/>
    </location>
</feature>
<feature type="helix" evidence="12">
    <location>
        <begin position="523"/>
        <end position="534"/>
    </location>
</feature>
<feature type="helix" evidence="11">
    <location>
        <begin position="551"/>
        <end position="553"/>
    </location>
</feature>
<feature type="helix" evidence="12">
    <location>
        <begin position="555"/>
        <end position="566"/>
    </location>
</feature>
<feature type="strand" evidence="14">
    <location>
        <begin position="568"/>
        <end position="570"/>
    </location>
</feature>
<feature type="helix" evidence="12">
    <location>
        <begin position="573"/>
        <end position="588"/>
    </location>
</feature>
<feature type="helix" evidence="11">
    <location>
        <begin position="590"/>
        <end position="592"/>
    </location>
</feature>
<feature type="helix" evidence="12">
    <location>
        <begin position="595"/>
        <end position="608"/>
    </location>
</feature>
<feature type="strand" evidence="14">
    <location>
        <begin position="612"/>
        <end position="614"/>
    </location>
</feature>
<feature type="helix" evidence="12">
    <location>
        <begin position="615"/>
        <end position="619"/>
    </location>
</feature>
<feature type="turn" evidence="12">
    <location>
        <begin position="620"/>
        <end position="625"/>
    </location>
</feature>
<feature type="helix" evidence="12">
    <location>
        <begin position="626"/>
        <end position="642"/>
    </location>
</feature>
<feature type="turn" evidence="12">
    <location>
        <begin position="646"/>
        <end position="648"/>
    </location>
</feature>
<feature type="helix" evidence="12">
    <location>
        <begin position="650"/>
        <end position="672"/>
    </location>
</feature>
<reference key="1">
    <citation type="journal article" date="2011" name="Cell">
        <title>Insight into structure and assembly of the nuclear pore complex by utilizing the genome of a eukaryotic thermophile.</title>
        <authorList>
            <person name="Amlacher S."/>
            <person name="Sarges P."/>
            <person name="Flemming D."/>
            <person name="van Noort V."/>
            <person name="Kunze R."/>
            <person name="Devos D.P."/>
            <person name="Arumugam M."/>
            <person name="Bork P."/>
            <person name="Hurt E."/>
        </authorList>
    </citation>
    <scope>NUCLEOTIDE SEQUENCE [LARGE SCALE GENOMIC DNA]</scope>
    <source>
        <strain>DSM 1495 / CBS 144.50 / IMI 039719</strain>
    </source>
</reference>
<reference evidence="7 8" key="2">
    <citation type="journal article" date="2012" name="Science">
        <title>Synchronizing nuclear import of ribosomal proteins with ribosome assembly.</title>
        <authorList>
            <person name="Kressler D."/>
            <person name="Bange G."/>
            <person name="Ogawa Y."/>
            <person name="Stjepanovic G."/>
            <person name="Bradatsch B."/>
            <person name="Pratte D."/>
            <person name="Amlacher S."/>
            <person name="Strauss D."/>
            <person name="Yoneda Y."/>
            <person name="Katahira J."/>
            <person name="Sinning I."/>
            <person name="Hurt E."/>
        </authorList>
    </citation>
    <scope>X-RAY CRYSTALLOGRAPHY (2.10 ANGSTROMS)</scope>
</reference>
<reference evidence="9" key="3">
    <citation type="journal article" date="2015" name="Nat. Commun.">
        <title>Symportin 1 chaperones 5S RNP assembly during ribosome biogenesis by occupying an essential rRNA-binding site.</title>
        <authorList>
            <person name="Calvino F.R."/>
            <person name="Kharde S."/>
            <person name="Ori A."/>
            <person name="Hendricks A."/>
            <person name="Wild K."/>
            <person name="Kressler D."/>
            <person name="Bange G."/>
            <person name="Hurt E."/>
            <person name="Beck M."/>
            <person name="Sinning I."/>
        </authorList>
    </citation>
    <scope>X-RAY CRYSTALLOGRAPHY (3.40 ANGSTROMS) OF 24-676</scope>
</reference>
<reference evidence="10" key="4">
    <citation type="journal article" date="2023" name="Nat. Struct. Mol. Biol.">
        <title>Structure of nascent 5S RNPs at the crossroad between ribosome assembly and MDM2-p53 pathways.</title>
        <authorList>
            <person name="Castillo Duque de Estrada N.M."/>
            <person name="Thoms M."/>
            <person name="Flemming D."/>
            <person name="Hammaren H.M."/>
            <person name="Buschauer R."/>
            <person name="Ameismeier M."/>
            <person name="Bassler J."/>
            <person name="Beck M."/>
            <person name="Beckmann R."/>
            <person name="Hurt E."/>
        </authorList>
    </citation>
    <scope>STRUCTURE BY ELECTRON MICROSCOPY (3.50 ANGSTROMS) IN COMPLEX WITH RPL11; RPL5; RRS1; RPF2 AND 5S RNA</scope>
    <scope>FUNCTION</scope>
    <scope>SUBUNIT</scope>
</reference>
<keyword id="KW-0002">3D-structure</keyword>
<keyword id="KW-1185">Reference proteome</keyword>
<keyword id="KW-0677">Repeat</keyword>
<dbReference type="EMBL" id="GL988041">
    <property type="protein sequence ID" value="EGS21488.1"/>
    <property type="molecule type" value="Genomic_DNA"/>
</dbReference>
<dbReference type="RefSeq" id="XP_006693784.1">
    <property type="nucleotide sequence ID" value="XM_006693721.1"/>
</dbReference>
<dbReference type="PDB" id="4GMN">
    <property type="method" value="X-ray"/>
    <property type="resolution" value="2.95 A"/>
    <property type="chains" value="A=1-676"/>
</dbReference>
<dbReference type="PDB" id="4GMO">
    <property type="method" value="X-ray"/>
    <property type="resolution" value="2.10 A"/>
    <property type="chains" value="A=1-676"/>
</dbReference>
<dbReference type="PDB" id="5AFF">
    <property type="method" value="X-ray"/>
    <property type="resolution" value="3.40 A"/>
    <property type="chains" value="A=24-676"/>
</dbReference>
<dbReference type="PDB" id="7OZS">
    <property type="method" value="EM"/>
    <property type="resolution" value="3.50 A"/>
    <property type="chains" value="F=1-676"/>
</dbReference>
<dbReference type="PDBsum" id="4GMN"/>
<dbReference type="PDBsum" id="4GMO"/>
<dbReference type="PDBsum" id="5AFF"/>
<dbReference type="PDBsum" id="7OZS"/>
<dbReference type="EMDB" id="EMD-13134"/>
<dbReference type="SMR" id="G0S5S6"/>
<dbReference type="STRING" id="759272.G0S5S6"/>
<dbReference type="KEGG" id="cthr:CTHT_0033460"/>
<dbReference type="eggNOG" id="ENOG502RYAI">
    <property type="taxonomic scope" value="Eukaryota"/>
</dbReference>
<dbReference type="HOGENOM" id="CLU_028608_0_0_1"/>
<dbReference type="OMA" id="ADMDMVT"/>
<dbReference type="OrthoDB" id="288703at2759"/>
<dbReference type="EvolutionaryTrace" id="G0S5S6"/>
<dbReference type="Proteomes" id="UP000008066">
    <property type="component" value="Unassembled WGS sequence"/>
</dbReference>
<dbReference type="GO" id="GO:0051082">
    <property type="term" value="F:unfolded protein binding"/>
    <property type="evidence" value="ECO:0007669"/>
    <property type="project" value="TreeGrafter"/>
</dbReference>
<dbReference type="GO" id="GO:0006606">
    <property type="term" value="P:protein import into nucleus"/>
    <property type="evidence" value="ECO:0007669"/>
    <property type="project" value="TreeGrafter"/>
</dbReference>
<dbReference type="GO" id="GO:0042273">
    <property type="term" value="P:ribosomal large subunit biogenesis"/>
    <property type="evidence" value="ECO:0007669"/>
    <property type="project" value="TreeGrafter"/>
</dbReference>
<dbReference type="CDD" id="cd13394">
    <property type="entry name" value="Syo1_like"/>
    <property type="match status" value="1"/>
</dbReference>
<dbReference type="Gene3D" id="1.25.10.10">
    <property type="entry name" value="Leucine-rich Repeat Variant"/>
    <property type="match status" value="2"/>
</dbReference>
<dbReference type="InterPro" id="IPR011989">
    <property type="entry name" value="ARM-like"/>
</dbReference>
<dbReference type="InterPro" id="IPR016024">
    <property type="entry name" value="ARM-type_fold"/>
</dbReference>
<dbReference type="InterPro" id="IPR052616">
    <property type="entry name" value="Nuclear_Import_Ribosome_Adapt"/>
</dbReference>
<dbReference type="PANTHER" id="PTHR13347">
    <property type="entry name" value="HEAT REPEAT-CONTAINING PROTEIN 3"/>
    <property type="match status" value="1"/>
</dbReference>
<dbReference type="PANTHER" id="PTHR13347:SF1">
    <property type="entry name" value="HEAT REPEAT-CONTAINING PROTEIN 3"/>
    <property type="match status" value="1"/>
</dbReference>
<dbReference type="SUPFAM" id="SSF48371">
    <property type="entry name" value="ARM repeat"/>
    <property type="match status" value="1"/>
</dbReference>
<organism>
    <name type="scientific">Chaetomium thermophilum (strain DSM 1495 / CBS 144.50 / IMI 039719)</name>
    <name type="common">Thermochaetoides thermophila</name>
    <dbReference type="NCBI Taxonomy" id="759272"/>
    <lineage>
        <taxon>Eukaryota</taxon>
        <taxon>Fungi</taxon>
        <taxon>Dikarya</taxon>
        <taxon>Ascomycota</taxon>
        <taxon>Pezizomycotina</taxon>
        <taxon>Sordariomycetes</taxon>
        <taxon>Sordariomycetidae</taxon>
        <taxon>Sordariales</taxon>
        <taxon>Chaetomiaceae</taxon>
        <taxon>Thermochaetoides</taxon>
    </lineage>
</organism>
<name>SYO1_CHATD</name>
<evidence type="ECO:0000255" key="1">
    <source>
        <dbReference type="PROSITE-ProRule" id="PRU00259"/>
    </source>
</evidence>
<evidence type="ECO:0000256" key="2">
    <source>
        <dbReference type="SAM" id="MobiDB-lite"/>
    </source>
</evidence>
<evidence type="ECO:0000269" key="3">
    <source>
    </source>
</evidence>
<evidence type="ECO:0000305" key="4"/>
<evidence type="ECO:0000305" key="5">
    <source>
    </source>
</evidence>
<evidence type="ECO:0000312" key="6">
    <source>
        <dbReference type="EMBL" id="EGS21488.1"/>
    </source>
</evidence>
<evidence type="ECO:0007744" key="7">
    <source>
        <dbReference type="PDB" id="4GMN"/>
    </source>
</evidence>
<evidence type="ECO:0007744" key="8">
    <source>
        <dbReference type="PDB" id="4GMO"/>
    </source>
</evidence>
<evidence type="ECO:0007744" key="9">
    <source>
        <dbReference type="PDB" id="5AFF"/>
    </source>
</evidence>
<evidence type="ECO:0007744" key="10">
    <source>
        <dbReference type="PDB" id="7OZS"/>
    </source>
</evidence>
<evidence type="ECO:0007829" key="11">
    <source>
        <dbReference type="PDB" id="4GMN"/>
    </source>
</evidence>
<evidence type="ECO:0007829" key="12">
    <source>
        <dbReference type="PDB" id="4GMO"/>
    </source>
</evidence>
<evidence type="ECO:0007829" key="13">
    <source>
        <dbReference type="PDB" id="5AFF"/>
    </source>
</evidence>
<evidence type="ECO:0007829" key="14">
    <source>
        <dbReference type="PDB" id="7OZS"/>
    </source>
</evidence>
<comment type="function">
    <text evidence="3">Involved in ribosomal large subunit assembly.</text>
</comment>
<comment type="subunit">
    <text evidence="3">Component of a hexameric 5S RNP precursor complex, composed of 5S RNA, RRS1, RPF2, RPL5, RPL11 and SYO1; this complex acts as a precursor for ribosome assembly.</text>
</comment>
<comment type="similarity">
    <text evidence="4">Belongs to the nuclear import and ribosome assembly adapter family.</text>
</comment>
<sequence>MGKTRRNRVRNRTDPIAKPVKPPTDPELAKLREDKILPVLKDLKSPDAKSRTTAAGAIANIVQDAKCRKLLLREQVVHIVLTETLTDNNIDSRAAGWEILKVLAQEEEADFCVHLYRLDVLTAIEHAAKAVLETLTTSEPPFSKLLKAQQRLVWDITGSLLVLIGLLALARDEIHEAVATKQTILRLLFRLISADIAPQDIYEEAISCLTTLSEDNLKVGQAITDDQETHVYDVLLKLATGTDPRAVMACGVLHNVFTSLQWMDHSPGKDGACDAILIPTLTRALEHVVPGGAKFNGDARYANITLLALVTLASIGTDFQETLVKGNQGSRESPISAADEEWNGFDDADGDAMDVDQKSSSGEDQEEDYEEIDVKEDDEDDDDDSITSEMQADMERVVGADGTDDGDLEDLPTLRELIQTAVPQLIRLSNLPIDSDESLTIQSHALSALNNISWTISCLEFANGENANIHNAWYPTAKKIWRKTILPILEADSADLKLATQVTSLAWAVARVLHGETPTDGNPHRKFISLYHSSKQQAGGNSNSIEEPEDPFQGLGVKCIGVVGSLAHDPAPIEVNREVGVFLVTLLRQSNNVPPAEIVEALNQLFDIYGDEELACDKEVFWKDGFLKHLEEFLPKMRTLTKGIDKRTQPELRTRADEALLNLGRFVQYKKKHAPK</sequence>
<protein>
    <recommendedName>
        <fullName evidence="5">Symportin 1</fullName>
        <shortName evidence="5">ctSYO1</shortName>
    </recommendedName>
</protein>
<proteinExistence type="evidence at protein level"/>
<accession>G0S5S6</accession>